<feature type="chain" id="PRO_1000216104" description="Na(+)/H(+) antiporter NhaA">
    <location>
        <begin position="1"/>
        <end position="398"/>
    </location>
</feature>
<feature type="transmembrane region" description="Helical" evidence="1">
    <location>
        <begin position="8"/>
        <end position="28"/>
    </location>
</feature>
<feature type="transmembrane region" description="Helical" evidence="1">
    <location>
        <begin position="59"/>
        <end position="79"/>
    </location>
</feature>
<feature type="transmembrane region" description="Helical" evidence="1">
    <location>
        <begin position="96"/>
        <end position="116"/>
    </location>
</feature>
<feature type="transmembrane region" description="Helical" evidence="1">
    <location>
        <begin position="124"/>
        <end position="144"/>
    </location>
</feature>
<feature type="transmembrane region" description="Helical" evidence="1">
    <location>
        <begin position="154"/>
        <end position="174"/>
    </location>
</feature>
<feature type="transmembrane region" description="Helical" evidence="1">
    <location>
        <begin position="177"/>
        <end position="197"/>
    </location>
</feature>
<feature type="transmembrane region" description="Helical" evidence="1">
    <location>
        <begin position="202"/>
        <end position="222"/>
    </location>
</feature>
<feature type="transmembrane region" description="Helical" evidence="1">
    <location>
        <begin position="223"/>
        <end position="243"/>
    </location>
</feature>
<feature type="transmembrane region" description="Helical" evidence="1">
    <location>
        <begin position="261"/>
        <end position="281"/>
    </location>
</feature>
<feature type="transmembrane region" description="Helical" evidence="1">
    <location>
        <begin position="292"/>
        <end position="312"/>
    </location>
</feature>
<feature type="transmembrane region" description="Helical" evidence="1">
    <location>
        <begin position="328"/>
        <end position="348"/>
    </location>
</feature>
<feature type="transmembrane region" description="Helical" evidence="1">
    <location>
        <begin position="362"/>
        <end position="382"/>
    </location>
</feature>
<sequence>MVDLVKRFLQLEAASGIILFFTAVLALILANSPWSEIYFSFLDIPVQFRVGSLDVHKPLLLWINDGLMAIFFLLVGMEIKREALEGSLSSMRQAGLPVIAAIGGMIVPAAMFSFIINDAPQFMAGWAIPMATDIAFALGVLSLLSGRVPLSLKVFLLALAIIDDLGAIMVIALFYTAELHTIPLLFAVALSAMLLMLNRSRVMLLTPYLIVGALLWLAVLKSGVHATIAGVILGFAIPHIRGATHTPLRQLEHQLHPWSSYFILPFFAFANAGLSFSGLSWTDLGSGLPLAIIVGLFIGKPLGVMLVSWLAVKAKLAALPENVGWQQLFGLSVLCGIGFTMSIFIGGLAFGTASEAFASSRLGILFGSLIAAVFGYILLRNATRTCQRKEQKRVSSQL</sequence>
<protein>
    <recommendedName>
        <fullName evidence="1">Na(+)/H(+) antiporter NhaA</fullName>
    </recommendedName>
    <alternativeName>
        <fullName evidence="1">Sodium/proton antiporter NhaA</fullName>
    </alternativeName>
</protein>
<name>NHAA_TOLAT</name>
<gene>
    <name evidence="1" type="primary">nhaA</name>
    <name type="ordered locus">Tola_2960</name>
</gene>
<dbReference type="EMBL" id="CP001616">
    <property type="protein sequence ID" value="ACQ94549.1"/>
    <property type="molecule type" value="Genomic_DNA"/>
</dbReference>
<dbReference type="RefSeq" id="WP_015879998.1">
    <property type="nucleotide sequence ID" value="NC_012691.1"/>
</dbReference>
<dbReference type="SMR" id="C4LD18"/>
<dbReference type="STRING" id="595494.Tola_2960"/>
<dbReference type="KEGG" id="tau:Tola_2960"/>
<dbReference type="eggNOG" id="COG3004">
    <property type="taxonomic scope" value="Bacteria"/>
</dbReference>
<dbReference type="HOGENOM" id="CLU_015803_1_0_6"/>
<dbReference type="OrthoDB" id="9808135at2"/>
<dbReference type="Proteomes" id="UP000009073">
    <property type="component" value="Chromosome"/>
</dbReference>
<dbReference type="GO" id="GO:0005886">
    <property type="term" value="C:plasma membrane"/>
    <property type="evidence" value="ECO:0007669"/>
    <property type="project" value="UniProtKB-SubCell"/>
</dbReference>
<dbReference type="GO" id="GO:0015385">
    <property type="term" value="F:sodium:proton antiporter activity"/>
    <property type="evidence" value="ECO:0007669"/>
    <property type="project" value="TreeGrafter"/>
</dbReference>
<dbReference type="GO" id="GO:0006885">
    <property type="term" value="P:regulation of pH"/>
    <property type="evidence" value="ECO:0007669"/>
    <property type="project" value="InterPro"/>
</dbReference>
<dbReference type="Gene3D" id="1.20.1530.10">
    <property type="entry name" value="Na+/H+ antiporter like domain"/>
    <property type="match status" value="1"/>
</dbReference>
<dbReference type="HAMAP" id="MF_01844">
    <property type="entry name" value="NhaA"/>
    <property type="match status" value="1"/>
</dbReference>
<dbReference type="InterPro" id="IPR023171">
    <property type="entry name" value="Na/H_antiporter_dom_sf"/>
</dbReference>
<dbReference type="InterPro" id="IPR004670">
    <property type="entry name" value="NhaA"/>
</dbReference>
<dbReference type="NCBIfam" id="TIGR00773">
    <property type="entry name" value="NhaA"/>
    <property type="match status" value="1"/>
</dbReference>
<dbReference type="NCBIfam" id="NF007111">
    <property type="entry name" value="PRK09560.1"/>
    <property type="match status" value="1"/>
</dbReference>
<dbReference type="NCBIfam" id="NF007112">
    <property type="entry name" value="PRK09561.1"/>
    <property type="match status" value="1"/>
</dbReference>
<dbReference type="PANTHER" id="PTHR30341:SF0">
    <property type="entry name" value="NA(+)_H(+) ANTIPORTER NHAA"/>
    <property type="match status" value="1"/>
</dbReference>
<dbReference type="PANTHER" id="PTHR30341">
    <property type="entry name" value="SODIUM ION/PROTON ANTIPORTER NHAA-RELATED"/>
    <property type="match status" value="1"/>
</dbReference>
<dbReference type="Pfam" id="PF06965">
    <property type="entry name" value="Na_H_antiport_1"/>
    <property type="match status" value="1"/>
</dbReference>
<proteinExistence type="inferred from homology"/>
<reference key="1">
    <citation type="submission" date="2009-05" db="EMBL/GenBank/DDBJ databases">
        <title>Complete sequence of Tolumonas auensis DSM 9187.</title>
        <authorList>
            <consortium name="US DOE Joint Genome Institute"/>
            <person name="Lucas S."/>
            <person name="Copeland A."/>
            <person name="Lapidus A."/>
            <person name="Glavina del Rio T."/>
            <person name="Tice H."/>
            <person name="Bruce D."/>
            <person name="Goodwin L."/>
            <person name="Pitluck S."/>
            <person name="Chertkov O."/>
            <person name="Brettin T."/>
            <person name="Detter J.C."/>
            <person name="Han C."/>
            <person name="Larimer F."/>
            <person name="Land M."/>
            <person name="Hauser L."/>
            <person name="Kyrpides N."/>
            <person name="Mikhailova N."/>
            <person name="Spring S."/>
            <person name="Beller H."/>
        </authorList>
    </citation>
    <scope>NUCLEOTIDE SEQUENCE [LARGE SCALE GENOMIC DNA]</scope>
    <source>
        <strain>DSM 9187 / NBRC 110442 / TA 4</strain>
    </source>
</reference>
<organism>
    <name type="scientific">Tolumonas auensis (strain DSM 9187 / NBRC 110442 / TA 4)</name>
    <dbReference type="NCBI Taxonomy" id="595494"/>
    <lineage>
        <taxon>Bacteria</taxon>
        <taxon>Pseudomonadati</taxon>
        <taxon>Pseudomonadota</taxon>
        <taxon>Gammaproteobacteria</taxon>
        <taxon>Aeromonadales</taxon>
        <taxon>Aeromonadaceae</taxon>
        <taxon>Tolumonas</taxon>
    </lineage>
</organism>
<comment type="function">
    <text evidence="1">Na(+)/H(+) antiporter that extrudes sodium in exchange for external protons.</text>
</comment>
<comment type="catalytic activity">
    <reaction evidence="1">
        <text>Na(+)(in) + 2 H(+)(out) = Na(+)(out) + 2 H(+)(in)</text>
        <dbReference type="Rhea" id="RHEA:29251"/>
        <dbReference type="ChEBI" id="CHEBI:15378"/>
        <dbReference type="ChEBI" id="CHEBI:29101"/>
    </reaction>
    <physiologicalReaction direction="left-to-right" evidence="1">
        <dbReference type="Rhea" id="RHEA:29252"/>
    </physiologicalReaction>
</comment>
<comment type="subcellular location">
    <subcellularLocation>
        <location evidence="1">Cell inner membrane</location>
        <topology evidence="1">Multi-pass membrane protein</topology>
    </subcellularLocation>
</comment>
<comment type="similarity">
    <text evidence="1">Belongs to the NhaA Na(+)/H(+) (TC 2.A.33) antiporter family.</text>
</comment>
<evidence type="ECO:0000255" key="1">
    <source>
        <dbReference type="HAMAP-Rule" id="MF_01844"/>
    </source>
</evidence>
<keyword id="KW-0050">Antiport</keyword>
<keyword id="KW-0997">Cell inner membrane</keyword>
<keyword id="KW-1003">Cell membrane</keyword>
<keyword id="KW-0406">Ion transport</keyword>
<keyword id="KW-0472">Membrane</keyword>
<keyword id="KW-1185">Reference proteome</keyword>
<keyword id="KW-0915">Sodium</keyword>
<keyword id="KW-0739">Sodium transport</keyword>
<keyword id="KW-0812">Transmembrane</keyword>
<keyword id="KW-1133">Transmembrane helix</keyword>
<keyword id="KW-0813">Transport</keyword>
<accession>C4LD18</accession>